<feature type="chain" id="PRO_1000184986" description="tRNA N6-adenosine threonylcarbamoyltransferase">
    <location>
        <begin position="1"/>
        <end position="336"/>
    </location>
</feature>
<feature type="binding site" evidence="1">
    <location>
        <position position="114"/>
    </location>
    <ligand>
        <name>Fe cation</name>
        <dbReference type="ChEBI" id="CHEBI:24875"/>
    </ligand>
</feature>
<feature type="binding site" evidence="1">
    <location>
        <position position="118"/>
    </location>
    <ligand>
        <name>Fe cation</name>
        <dbReference type="ChEBI" id="CHEBI:24875"/>
    </ligand>
</feature>
<feature type="binding site" evidence="1">
    <location>
        <begin position="136"/>
        <end position="140"/>
    </location>
    <ligand>
        <name>substrate</name>
    </ligand>
</feature>
<feature type="binding site" evidence="1">
    <location>
        <position position="169"/>
    </location>
    <ligand>
        <name>substrate</name>
    </ligand>
</feature>
<feature type="binding site" evidence="1">
    <location>
        <position position="182"/>
    </location>
    <ligand>
        <name>substrate</name>
    </ligand>
</feature>
<feature type="binding site" evidence="1">
    <location>
        <position position="186"/>
    </location>
    <ligand>
        <name>substrate</name>
    </ligand>
</feature>
<feature type="binding site" evidence="1">
    <location>
        <position position="275"/>
    </location>
    <ligand>
        <name>substrate</name>
    </ligand>
</feature>
<feature type="binding site" evidence="1">
    <location>
        <position position="301"/>
    </location>
    <ligand>
        <name>Fe cation</name>
        <dbReference type="ChEBI" id="CHEBI:24875"/>
    </ligand>
</feature>
<keyword id="KW-0012">Acyltransferase</keyword>
<keyword id="KW-0963">Cytoplasm</keyword>
<keyword id="KW-0408">Iron</keyword>
<keyword id="KW-0479">Metal-binding</keyword>
<keyword id="KW-0808">Transferase</keyword>
<keyword id="KW-0819">tRNA processing</keyword>
<gene>
    <name evidence="1" type="primary">tsaD</name>
    <name type="synonym">gcp</name>
    <name type="ordered locus">SPP_0197</name>
</gene>
<organism>
    <name type="scientific">Streptococcus pneumoniae (strain P1031)</name>
    <dbReference type="NCBI Taxonomy" id="488223"/>
    <lineage>
        <taxon>Bacteria</taxon>
        <taxon>Bacillati</taxon>
        <taxon>Bacillota</taxon>
        <taxon>Bacilli</taxon>
        <taxon>Lactobacillales</taxon>
        <taxon>Streptococcaceae</taxon>
        <taxon>Streptococcus</taxon>
    </lineage>
</organism>
<sequence length="336" mass="36159">MKDRYILAFETSCDETSVAVLKNDDELLSNVIASQIESHKRFGGVVPEVASRHHVEVITACIEEALAEAGITEEDVTAVAVTYGPGLVGALLVGLSAAKAFAWAHGLPLIPVNHMAGHLMAAQSVEPLEFPLLALLVSGGHTELVYVSEAGDYKIVGETRDDAVGEAYDKVGRVMGLTYPAGREIDDLAHQGQDIYDFPRAMIKEDNLEFSFSGLKSAFINLHHNAEQKGESLSTEDLCASFQAAVMDILMAKTKKALEKYPVKTLVVAGGVAANKGLRERLAAEITDVKVIIPPLRLCGDNAGMIAYASVSEWNKENFAGWDLNAKPSLAFDTME</sequence>
<dbReference type="EC" id="2.3.1.234" evidence="1"/>
<dbReference type="EMBL" id="CP000920">
    <property type="protein sequence ID" value="ACO21064.1"/>
    <property type="molecule type" value="Genomic_DNA"/>
</dbReference>
<dbReference type="RefSeq" id="WP_000655036.1">
    <property type="nucleotide sequence ID" value="NC_012467.1"/>
</dbReference>
<dbReference type="SMR" id="C1CI40"/>
<dbReference type="GeneID" id="45652368"/>
<dbReference type="KEGG" id="spp:SPP_0197"/>
<dbReference type="HOGENOM" id="CLU_023208_0_2_9"/>
<dbReference type="GO" id="GO:0005737">
    <property type="term" value="C:cytoplasm"/>
    <property type="evidence" value="ECO:0007669"/>
    <property type="project" value="UniProtKB-SubCell"/>
</dbReference>
<dbReference type="GO" id="GO:0005506">
    <property type="term" value="F:iron ion binding"/>
    <property type="evidence" value="ECO:0007669"/>
    <property type="project" value="UniProtKB-UniRule"/>
</dbReference>
<dbReference type="GO" id="GO:0061711">
    <property type="term" value="F:N(6)-L-threonylcarbamoyladenine synthase activity"/>
    <property type="evidence" value="ECO:0007669"/>
    <property type="project" value="UniProtKB-EC"/>
</dbReference>
<dbReference type="GO" id="GO:0002949">
    <property type="term" value="P:tRNA threonylcarbamoyladenosine modification"/>
    <property type="evidence" value="ECO:0007669"/>
    <property type="project" value="UniProtKB-UniRule"/>
</dbReference>
<dbReference type="CDD" id="cd24133">
    <property type="entry name" value="ASKHA_NBD_TsaD_bac"/>
    <property type="match status" value="1"/>
</dbReference>
<dbReference type="FunFam" id="3.30.420.40:FF:000012">
    <property type="entry name" value="tRNA N6-adenosine threonylcarbamoyltransferase"/>
    <property type="match status" value="1"/>
</dbReference>
<dbReference type="FunFam" id="3.30.420.40:FF:000040">
    <property type="entry name" value="tRNA N6-adenosine threonylcarbamoyltransferase"/>
    <property type="match status" value="1"/>
</dbReference>
<dbReference type="Gene3D" id="3.30.420.40">
    <property type="match status" value="2"/>
</dbReference>
<dbReference type="HAMAP" id="MF_01445">
    <property type="entry name" value="TsaD"/>
    <property type="match status" value="1"/>
</dbReference>
<dbReference type="InterPro" id="IPR043129">
    <property type="entry name" value="ATPase_NBD"/>
</dbReference>
<dbReference type="InterPro" id="IPR000905">
    <property type="entry name" value="Gcp-like_dom"/>
</dbReference>
<dbReference type="InterPro" id="IPR017861">
    <property type="entry name" value="KAE1/TsaD"/>
</dbReference>
<dbReference type="InterPro" id="IPR017860">
    <property type="entry name" value="Peptidase_M22_CS"/>
</dbReference>
<dbReference type="InterPro" id="IPR022450">
    <property type="entry name" value="TsaD"/>
</dbReference>
<dbReference type="NCBIfam" id="TIGR00329">
    <property type="entry name" value="gcp_kae1"/>
    <property type="match status" value="1"/>
</dbReference>
<dbReference type="NCBIfam" id="TIGR03723">
    <property type="entry name" value="T6A_TsaD_YgjD"/>
    <property type="match status" value="1"/>
</dbReference>
<dbReference type="PANTHER" id="PTHR11735">
    <property type="entry name" value="TRNA N6-ADENOSINE THREONYLCARBAMOYLTRANSFERASE"/>
    <property type="match status" value="1"/>
</dbReference>
<dbReference type="PANTHER" id="PTHR11735:SF6">
    <property type="entry name" value="TRNA N6-ADENOSINE THREONYLCARBAMOYLTRANSFERASE, MITOCHONDRIAL"/>
    <property type="match status" value="1"/>
</dbReference>
<dbReference type="Pfam" id="PF00814">
    <property type="entry name" value="TsaD"/>
    <property type="match status" value="1"/>
</dbReference>
<dbReference type="PRINTS" id="PR00789">
    <property type="entry name" value="OSIALOPTASE"/>
</dbReference>
<dbReference type="SUPFAM" id="SSF53067">
    <property type="entry name" value="Actin-like ATPase domain"/>
    <property type="match status" value="1"/>
</dbReference>
<dbReference type="PROSITE" id="PS01016">
    <property type="entry name" value="GLYCOPROTEASE"/>
    <property type="match status" value="1"/>
</dbReference>
<comment type="function">
    <text evidence="1">Required for the formation of a threonylcarbamoyl group on adenosine at position 37 (t(6)A37) in tRNAs that read codons beginning with adenine. Is involved in the transfer of the threonylcarbamoyl moiety of threonylcarbamoyl-AMP (TC-AMP) to the N6 group of A37, together with TsaE and TsaB. TsaD likely plays a direct catalytic role in this reaction.</text>
</comment>
<comment type="catalytic activity">
    <reaction evidence="1">
        <text>L-threonylcarbamoyladenylate + adenosine(37) in tRNA = N(6)-L-threonylcarbamoyladenosine(37) in tRNA + AMP + H(+)</text>
        <dbReference type="Rhea" id="RHEA:37059"/>
        <dbReference type="Rhea" id="RHEA-COMP:10162"/>
        <dbReference type="Rhea" id="RHEA-COMP:10163"/>
        <dbReference type="ChEBI" id="CHEBI:15378"/>
        <dbReference type="ChEBI" id="CHEBI:73682"/>
        <dbReference type="ChEBI" id="CHEBI:74411"/>
        <dbReference type="ChEBI" id="CHEBI:74418"/>
        <dbReference type="ChEBI" id="CHEBI:456215"/>
        <dbReference type="EC" id="2.3.1.234"/>
    </reaction>
</comment>
<comment type="cofactor">
    <cofactor evidence="1">
        <name>Fe(2+)</name>
        <dbReference type="ChEBI" id="CHEBI:29033"/>
    </cofactor>
    <text evidence="1">Binds 1 Fe(2+) ion per subunit.</text>
</comment>
<comment type="subcellular location">
    <subcellularLocation>
        <location evidence="1">Cytoplasm</location>
    </subcellularLocation>
</comment>
<comment type="similarity">
    <text evidence="1">Belongs to the KAE1 / TsaD family.</text>
</comment>
<evidence type="ECO:0000255" key="1">
    <source>
        <dbReference type="HAMAP-Rule" id="MF_01445"/>
    </source>
</evidence>
<protein>
    <recommendedName>
        <fullName evidence="1">tRNA N6-adenosine threonylcarbamoyltransferase</fullName>
        <ecNumber evidence="1">2.3.1.234</ecNumber>
    </recommendedName>
    <alternativeName>
        <fullName evidence="1">N6-L-threonylcarbamoyladenine synthase</fullName>
        <shortName evidence="1">t(6)A synthase</shortName>
    </alternativeName>
    <alternativeName>
        <fullName evidence="1">t(6)A37 threonylcarbamoyladenosine biosynthesis protein TsaD</fullName>
    </alternativeName>
    <alternativeName>
        <fullName evidence="1">tRNA threonylcarbamoyladenosine biosynthesis protein TsaD</fullName>
    </alternativeName>
</protein>
<reference key="1">
    <citation type="journal article" date="2010" name="Genome Biol.">
        <title>Structure and dynamics of the pan-genome of Streptococcus pneumoniae and closely related species.</title>
        <authorList>
            <person name="Donati C."/>
            <person name="Hiller N.L."/>
            <person name="Tettelin H."/>
            <person name="Muzzi A."/>
            <person name="Croucher N.J."/>
            <person name="Angiuoli S.V."/>
            <person name="Oggioni M."/>
            <person name="Dunning Hotopp J.C."/>
            <person name="Hu F.Z."/>
            <person name="Riley D.R."/>
            <person name="Covacci A."/>
            <person name="Mitchell T.J."/>
            <person name="Bentley S.D."/>
            <person name="Kilian M."/>
            <person name="Ehrlich G.D."/>
            <person name="Rappuoli R."/>
            <person name="Moxon E.R."/>
            <person name="Masignani V."/>
        </authorList>
    </citation>
    <scope>NUCLEOTIDE SEQUENCE [LARGE SCALE GENOMIC DNA]</scope>
    <source>
        <strain>P1031</strain>
    </source>
</reference>
<accession>C1CI40</accession>
<proteinExistence type="inferred from homology"/>
<name>TSAD_STRZP</name>